<accession>Q31VZ0</accession>
<reference key="1">
    <citation type="journal article" date="2005" name="Nucleic Acids Res.">
        <title>Genome dynamics and diversity of Shigella species, the etiologic agents of bacillary dysentery.</title>
        <authorList>
            <person name="Yang F."/>
            <person name="Yang J."/>
            <person name="Zhang X."/>
            <person name="Chen L."/>
            <person name="Jiang Y."/>
            <person name="Yan Y."/>
            <person name="Tang X."/>
            <person name="Wang J."/>
            <person name="Xiong Z."/>
            <person name="Dong J."/>
            <person name="Xue Y."/>
            <person name="Zhu Y."/>
            <person name="Xu X."/>
            <person name="Sun L."/>
            <person name="Chen S."/>
            <person name="Nie H."/>
            <person name="Peng J."/>
            <person name="Xu J."/>
            <person name="Wang Y."/>
            <person name="Yuan Z."/>
            <person name="Wen Y."/>
            <person name="Yao Z."/>
            <person name="Shen Y."/>
            <person name="Qiang B."/>
            <person name="Hou Y."/>
            <person name="Yu J."/>
            <person name="Jin Q."/>
        </authorList>
    </citation>
    <scope>NUCLEOTIDE SEQUENCE [LARGE SCALE GENOMIC DNA]</scope>
    <source>
        <strain>Sb227</strain>
    </source>
</reference>
<dbReference type="EC" id="3.5.1.88" evidence="1"/>
<dbReference type="EMBL" id="CP000036">
    <property type="protein sequence ID" value="ABB67768.1"/>
    <property type="molecule type" value="Genomic_DNA"/>
</dbReference>
<dbReference type="RefSeq" id="WP_000114984.1">
    <property type="nucleotide sequence ID" value="NC_007613.1"/>
</dbReference>
<dbReference type="SMR" id="Q31VZ0"/>
<dbReference type="GeneID" id="89518132"/>
<dbReference type="KEGG" id="sbo:SBO_3280"/>
<dbReference type="HOGENOM" id="CLU_061901_2_1_6"/>
<dbReference type="Proteomes" id="UP000007067">
    <property type="component" value="Chromosome"/>
</dbReference>
<dbReference type="GO" id="GO:0046872">
    <property type="term" value="F:metal ion binding"/>
    <property type="evidence" value="ECO:0007669"/>
    <property type="project" value="UniProtKB-KW"/>
</dbReference>
<dbReference type="GO" id="GO:0042586">
    <property type="term" value="F:peptide deformylase activity"/>
    <property type="evidence" value="ECO:0007669"/>
    <property type="project" value="UniProtKB-UniRule"/>
</dbReference>
<dbReference type="GO" id="GO:0043686">
    <property type="term" value="P:co-translational protein modification"/>
    <property type="evidence" value="ECO:0007669"/>
    <property type="project" value="TreeGrafter"/>
</dbReference>
<dbReference type="GO" id="GO:0006412">
    <property type="term" value="P:translation"/>
    <property type="evidence" value="ECO:0007669"/>
    <property type="project" value="UniProtKB-UniRule"/>
</dbReference>
<dbReference type="CDD" id="cd00487">
    <property type="entry name" value="Pep_deformylase"/>
    <property type="match status" value="1"/>
</dbReference>
<dbReference type="FunFam" id="3.90.45.10:FF:000001">
    <property type="entry name" value="Peptide deformylase"/>
    <property type="match status" value="1"/>
</dbReference>
<dbReference type="Gene3D" id="3.90.45.10">
    <property type="entry name" value="Peptide deformylase"/>
    <property type="match status" value="1"/>
</dbReference>
<dbReference type="HAMAP" id="MF_00163">
    <property type="entry name" value="Pep_deformylase"/>
    <property type="match status" value="1"/>
</dbReference>
<dbReference type="InterPro" id="IPR023635">
    <property type="entry name" value="Peptide_deformylase"/>
</dbReference>
<dbReference type="InterPro" id="IPR036821">
    <property type="entry name" value="Peptide_deformylase_sf"/>
</dbReference>
<dbReference type="NCBIfam" id="TIGR00079">
    <property type="entry name" value="pept_deformyl"/>
    <property type="match status" value="1"/>
</dbReference>
<dbReference type="NCBIfam" id="NF001159">
    <property type="entry name" value="PRK00150.1-3"/>
    <property type="match status" value="1"/>
</dbReference>
<dbReference type="PANTHER" id="PTHR10458">
    <property type="entry name" value="PEPTIDE DEFORMYLASE"/>
    <property type="match status" value="1"/>
</dbReference>
<dbReference type="PANTHER" id="PTHR10458:SF21">
    <property type="entry name" value="PEPTIDE DEFORMYLASE"/>
    <property type="match status" value="1"/>
</dbReference>
<dbReference type="Pfam" id="PF01327">
    <property type="entry name" value="Pep_deformylase"/>
    <property type="match status" value="1"/>
</dbReference>
<dbReference type="PIRSF" id="PIRSF004749">
    <property type="entry name" value="Pep_def"/>
    <property type="match status" value="1"/>
</dbReference>
<dbReference type="PRINTS" id="PR01576">
    <property type="entry name" value="PDEFORMYLASE"/>
</dbReference>
<dbReference type="SUPFAM" id="SSF56420">
    <property type="entry name" value="Peptide deformylase"/>
    <property type="match status" value="1"/>
</dbReference>
<feature type="chain" id="PRO_0000301096" description="Peptide deformylase">
    <location>
        <begin position="1"/>
        <end position="169"/>
    </location>
</feature>
<feature type="active site" evidence="1">
    <location>
        <position position="134"/>
    </location>
</feature>
<feature type="binding site" evidence="1">
    <location>
        <position position="91"/>
    </location>
    <ligand>
        <name>Fe cation</name>
        <dbReference type="ChEBI" id="CHEBI:24875"/>
    </ligand>
</feature>
<feature type="binding site" evidence="1">
    <location>
        <position position="133"/>
    </location>
    <ligand>
        <name>Fe cation</name>
        <dbReference type="ChEBI" id="CHEBI:24875"/>
    </ligand>
</feature>
<feature type="binding site" evidence="1">
    <location>
        <position position="137"/>
    </location>
    <ligand>
        <name>Fe cation</name>
        <dbReference type="ChEBI" id="CHEBI:24875"/>
    </ligand>
</feature>
<name>DEF_SHIBS</name>
<comment type="function">
    <text evidence="1">Removes the formyl group from the N-terminal Met of newly synthesized proteins. Requires at least a dipeptide for an efficient rate of reaction. N-terminal L-methionine is a prerequisite for activity but the enzyme has broad specificity at other positions.</text>
</comment>
<comment type="catalytic activity">
    <reaction evidence="1">
        <text>N-terminal N-formyl-L-methionyl-[peptide] + H2O = N-terminal L-methionyl-[peptide] + formate</text>
        <dbReference type="Rhea" id="RHEA:24420"/>
        <dbReference type="Rhea" id="RHEA-COMP:10639"/>
        <dbReference type="Rhea" id="RHEA-COMP:10640"/>
        <dbReference type="ChEBI" id="CHEBI:15377"/>
        <dbReference type="ChEBI" id="CHEBI:15740"/>
        <dbReference type="ChEBI" id="CHEBI:49298"/>
        <dbReference type="ChEBI" id="CHEBI:64731"/>
        <dbReference type="EC" id="3.5.1.88"/>
    </reaction>
</comment>
<comment type="cofactor">
    <cofactor evidence="1">
        <name>Fe(2+)</name>
        <dbReference type="ChEBI" id="CHEBI:29033"/>
    </cofactor>
    <text evidence="1">Binds 1 Fe(2+) ion.</text>
</comment>
<comment type="similarity">
    <text evidence="1">Belongs to the polypeptide deformylase family.</text>
</comment>
<proteinExistence type="inferred from homology"/>
<evidence type="ECO:0000255" key="1">
    <source>
        <dbReference type="HAMAP-Rule" id="MF_00163"/>
    </source>
</evidence>
<organism>
    <name type="scientific">Shigella boydii serotype 4 (strain Sb227)</name>
    <dbReference type="NCBI Taxonomy" id="300268"/>
    <lineage>
        <taxon>Bacteria</taxon>
        <taxon>Pseudomonadati</taxon>
        <taxon>Pseudomonadota</taxon>
        <taxon>Gammaproteobacteria</taxon>
        <taxon>Enterobacterales</taxon>
        <taxon>Enterobacteriaceae</taxon>
        <taxon>Shigella</taxon>
    </lineage>
</organism>
<keyword id="KW-0378">Hydrolase</keyword>
<keyword id="KW-0408">Iron</keyword>
<keyword id="KW-0479">Metal-binding</keyword>
<keyword id="KW-0648">Protein biosynthesis</keyword>
<protein>
    <recommendedName>
        <fullName evidence="1">Peptide deformylase</fullName>
        <shortName evidence="1">PDF</shortName>
        <ecNumber evidence="1">3.5.1.88</ecNumber>
    </recommendedName>
    <alternativeName>
        <fullName evidence="1">Polypeptide deformylase</fullName>
    </alternativeName>
</protein>
<gene>
    <name evidence="1" type="primary">def</name>
    <name type="ordered locus">SBO_3280</name>
</gene>
<sequence length="169" mass="19328">MSVLQVLHIPDERLRKVAKPVEEVNAEIQRIVDDMFETMYAEEGIGLAATQVDIHQRIIVIDVSENRDERLVLINPELLEKSGETGIEEGCLSIPEQRALVPRAEKVKIRALDRDGKPFELEADGLLAICIQHEMDHLVGKLFMDYLSPLKQQRIRQKVEKLDRLKARA</sequence>